<sequence>MEAFEISDFKEHAKKKSMWAGALNKVTISGLMGVFTEDEDLMALPIHRDHCPALLKIFDEIIVNATDHERACHSKTKKVTYIKISFDKGVFSCENDGPGIPIAKHEQASLIAKRDVYVPEVASCHFLAGTNINKAKDCIKGGTNGVGLKLAMVHSQWAILTTADGAQKYVQHINQRLDIIEPPTITPSREMFTRIELMPVYQELGYAEPLSETEQADLSAWIYLRACQCAAYVGKGTTIYYNDKPCRTGSVMALAKMYTLLSAPNSTIHTATIKADAKPYSLHPLQVAAVVSPKFKKFEHVSVINGVNCVKGEHVTFLKKTINEMVVKKFQQTIKDKNRKTTLRDSCSNIFIVIVGSIPGIEWTGQRKDELSIAENVFKTHYSIPSSFLTSMTKSIVDILLQSISKKDNHKQVDVDKYTRARNAGGKRAQDCMLLAAEGDSALSLLRTGLTLGKSNPSGPSFDFCGMISLGGVIMNACKKVTNITTDSGETIMVRNEQLTNNKVLQGIVQVLGLDFNCHYKTQEERAKLRYGCIVACVDQDLDGCGKILGLLLAYFHLFWPQLIIHGFVKRLLTPLIRVYEKGKTVPVEFYYEQEFDAWAKKQTSLANHTVKYYKGLAAHDTHEVKSMFKHFDNMVYTFTLDDSAKELFHIYFGGESELRKRELCTGVVPLTETQTQSIHSVRRIPCSLHLQVDTKAYKLDAIERQIPNFLDGMTRARRKILAGGVKCFASNNRERKVFQFGGYVADHMFYHHGDMSLNTSIIKAAQYYPGSSHLYPVFIGIGSFGSRHLGGKDAGSPRYISVQLASEFIKTMFPAEDSWLLPYVFEDGQRAEPEYYVPVLPLAIMEYGANPSEGWKYTTWARQLEDILALVRAYVDKNNPKHELLHYAIKHKITILPLRPSNYNFKGHLKRFGQYYYSYGTYVISEQRNIITITELPLRVPTVAYIESIKKSSNRMTFIEEIIDYSSSETIEILVKLKPNSLNRIMEEFKCTEEQDSIENFLRLRNCLHSHLNFVKPKGGIIEFNTYYEILYAWLPYRRELYQKRLMREHAVLKLRIIMETAIVRYINESAELNLSHYEDEKEASRILSEHGFPPLNQTLIISPEFASIEELNQKALQGCYTYILSLQARELLIAAKTRRVEKIKKMQARLDKVEQLLQESPFPGASVWLEEIDAVEKAIIKGRNTQWKFH</sequence>
<proteinExistence type="inferred from homology"/>
<keyword id="KW-0067">ATP-binding</keyword>
<keyword id="KW-0238">DNA-binding</keyword>
<keyword id="KW-0244">Early protein</keyword>
<keyword id="KW-1035">Host cytoplasm</keyword>
<keyword id="KW-0413">Isomerase</keyword>
<keyword id="KW-0460">Magnesium</keyword>
<keyword id="KW-0479">Metal-binding</keyword>
<keyword id="KW-0547">Nucleotide-binding</keyword>
<keyword id="KW-0799">Topoisomerase</keyword>
<gene>
    <name type="ordered locus">Pret-124</name>
</gene>
<reference key="1">
    <citation type="submission" date="2003-03" db="EMBL/GenBank/DDBJ databases">
        <title>African swine fever virus genomes.</title>
        <authorList>
            <person name="Kutish G.F."/>
            <person name="Rock D.L."/>
        </authorList>
    </citation>
    <scope>NUCLEOTIDE SEQUENCE [GENOMIC DNA]</scope>
</reference>
<accession>P0C9C0</accession>
<name>TOP2_ASFP4</name>
<comment type="function">
    <text evidence="3">Type II topoisomerase. Processively relaxes supercoiled DNA. Displays DNA-supercoiling activity only when associated with the viral histone-like protein.</text>
</comment>
<comment type="catalytic activity">
    <reaction evidence="4">
        <text>ATP-dependent breakage, passage and rejoining of double-stranded DNA.</text>
        <dbReference type="EC" id="5.6.2.2"/>
    </reaction>
</comment>
<comment type="cofactor">
    <cofactor evidence="2">
        <name>Mg(2+)</name>
        <dbReference type="ChEBI" id="CHEBI:18420"/>
    </cofactor>
    <cofactor evidence="2">
        <name>Mn(2+)</name>
        <dbReference type="ChEBI" id="CHEBI:29035"/>
    </cofactor>
    <cofactor evidence="2">
        <name>Ca(2+)</name>
        <dbReference type="ChEBI" id="CHEBI:29108"/>
    </cofactor>
    <text evidence="2">Binds two Mg(2+) per subunit. The magnesium ions form salt bridges with both the protein and the DNA. Can also accept other divalent metal cations, such as Mn(2+) or Ca(2+).</text>
</comment>
<comment type="subcellular location">
    <subcellularLocation>
        <location evidence="3">Host cytoplasm</location>
    </subcellularLocation>
    <text evidence="3">Localizes to the cytoplasmic viral factories.</text>
</comment>
<comment type="induction">
    <text evidence="5">Expressed in the early phase of the viral replicative cycle.</text>
</comment>
<comment type="similarity">
    <text evidence="5">Belongs to the type II topoisomerase family.</text>
</comment>
<protein>
    <recommendedName>
        <fullName evidence="3">DNA topoisomerase 2</fullName>
        <ecNumber evidence="4">5.6.2.2</ecNumber>
    </recommendedName>
    <alternativeName>
        <fullName>DNA topoisomerase II</fullName>
    </alternativeName>
</protein>
<dbReference type="EC" id="5.6.2.2" evidence="4"/>
<dbReference type="EMBL" id="AY261363">
    <property type="status" value="NOT_ANNOTATED_CDS"/>
    <property type="molecule type" value="Genomic_DNA"/>
</dbReference>
<dbReference type="SMR" id="P0C9C0"/>
<dbReference type="Proteomes" id="UP000000859">
    <property type="component" value="Segment"/>
</dbReference>
<dbReference type="GO" id="GO:0030430">
    <property type="term" value="C:host cell cytoplasm"/>
    <property type="evidence" value="ECO:0007669"/>
    <property type="project" value="UniProtKB-SubCell"/>
</dbReference>
<dbReference type="GO" id="GO:0005524">
    <property type="term" value="F:ATP binding"/>
    <property type="evidence" value="ECO:0007669"/>
    <property type="project" value="UniProtKB-KW"/>
</dbReference>
<dbReference type="GO" id="GO:0003677">
    <property type="term" value="F:DNA binding"/>
    <property type="evidence" value="ECO:0007669"/>
    <property type="project" value="UniProtKB-KW"/>
</dbReference>
<dbReference type="GO" id="GO:0003918">
    <property type="term" value="F:DNA topoisomerase type II (double strand cut, ATP-hydrolyzing) activity"/>
    <property type="evidence" value="ECO:0007669"/>
    <property type="project" value="UniProtKB-EC"/>
</dbReference>
<dbReference type="GO" id="GO:0046872">
    <property type="term" value="F:metal ion binding"/>
    <property type="evidence" value="ECO:0007669"/>
    <property type="project" value="UniProtKB-KW"/>
</dbReference>
<dbReference type="GO" id="GO:0006265">
    <property type="term" value="P:DNA topological change"/>
    <property type="evidence" value="ECO:0007669"/>
    <property type="project" value="InterPro"/>
</dbReference>
<dbReference type="GO" id="GO:0000819">
    <property type="term" value="P:sister chromatid segregation"/>
    <property type="evidence" value="ECO:0007669"/>
    <property type="project" value="TreeGrafter"/>
</dbReference>
<dbReference type="FunFam" id="3.40.50.670:FF:000001">
    <property type="entry name" value="DNA topoisomerase 2"/>
    <property type="match status" value="1"/>
</dbReference>
<dbReference type="Gene3D" id="3.30.1360.40">
    <property type="match status" value="1"/>
</dbReference>
<dbReference type="Gene3D" id="3.30.1490.30">
    <property type="match status" value="1"/>
</dbReference>
<dbReference type="Gene3D" id="3.30.230.10">
    <property type="match status" value="1"/>
</dbReference>
<dbReference type="Gene3D" id="3.40.50.670">
    <property type="match status" value="1"/>
</dbReference>
<dbReference type="Gene3D" id="3.30.565.10">
    <property type="entry name" value="Histidine kinase-like ATPase, C-terminal domain"/>
    <property type="match status" value="1"/>
</dbReference>
<dbReference type="Gene3D" id="3.90.199.10">
    <property type="entry name" value="Topoisomerase II, domain 5"/>
    <property type="match status" value="1"/>
</dbReference>
<dbReference type="Gene3D" id="1.10.268.10">
    <property type="entry name" value="Topoisomerase, domain 3"/>
    <property type="match status" value="1"/>
</dbReference>
<dbReference type="InterPro" id="IPR050634">
    <property type="entry name" value="DNA_Topoisomerase_II"/>
</dbReference>
<dbReference type="InterPro" id="IPR036890">
    <property type="entry name" value="HATPase_C_sf"/>
</dbReference>
<dbReference type="InterPro" id="IPR020568">
    <property type="entry name" value="Ribosomal_Su5_D2-typ_SF"/>
</dbReference>
<dbReference type="InterPro" id="IPR014721">
    <property type="entry name" value="Ribsml_uS5_D2-typ_fold_subgr"/>
</dbReference>
<dbReference type="InterPro" id="IPR001241">
    <property type="entry name" value="Topo_IIA"/>
</dbReference>
<dbReference type="InterPro" id="IPR013760">
    <property type="entry name" value="Topo_IIA-like_dom_sf"/>
</dbReference>
<dbReference type="InterPro" id="IPR013758">
    <property type="entry name" value="Topo_IIA_A/C_ab"/>
</dbReference>
<dbReference type="InterPro" id="IPR013757">
    <property type="entry name" value="Topo_IIA_A_a_sf"/>
</dbReference>
<dbReference type="InterPro" id="IPR013759">
    <property type="entry name" value="Topo_IIA_B_C"/>
</dbReference>
<dbReference type="InterPro" id="IPR002205">
    <property type="entry name" value="Topo_IIA_dom_A"/>
</dbReference>
<dbReference type="InterPro" id="IPR001154">
    <property type="entry name" value="TopoII_euk"/>
</dbReference>
<dbReference type="InterPro" id="IPR018522">
    <property type="entry name" value="TopoIIA_CS"/>
</dbReference>
<dbReference type="InterPro" id="IPR031660">
    <property type="entry name" value="TOPRIM_C"/>
</dbReference>
<dbReference type="PANTHER" id="PTHR10169:SF50">
    <property type="entry name" value="DNA TOPOISOMERASE 2"/>
    <property type="match status" value="1"/>
</dbReference>
<dbReference type="PANTHER" id="PTHR10169">
    <property type="entry name" value="DNA TOPOISOMERASE/GYRASE"/>
    <property type="match status" value="1"/>
</dbReference>
<dbReference type="Pfam" id="PF00521">
    <property type="entry name" value="DNA_topoisoIV"/>
    <property type="match status" value="1"/>
</dbReference>
<dbReference type="Pfam" id="PF16898">
    <property type="entry name" value="TOPRIM_C"/>
    <property type="match status" value="1"/>
</dbReference>
<dbReference type="PRINTS" id="PR01158">
    <property type="entry name" value="TOPISMRASEII"/>
</dbReference>
<dbReference type="PRINTS" id="PR00418">
    <property type="entry name" value="TPI2FAMILY"/>
</dbReference>
<dbReference type="SMART" id="SM00433">
    <property type="entry name" value="TOP2c"/>
    <property type="match status" value="1"/>
</dbReference>
<dbReference type="SMART" id="SM00434">
    <property type="entry name" value="TOP4c"/>
    <property type="match status" value="1"/>
</dbReference>
<dbReference type="SUPFAM" id="SSF55874">
    <property type="entry name" value="ATPase domain of HSP90 chaperone/DNA topoisomerase II/histidine kinase"/>
    <property type="match status" value="1"/>
</dbReference>
<dbReference type="SUPFAM" id="SSF54211">
    <property type="entry name" value="Ribosomal protein S5 domain 2-like"/>
    <property type="match status" value="1"/>
</dbReference>
<dbReference type="SUPFAM" id="SSF56719">
    <property type="entry name" value="Type II DNA topoisomerase"/>
    <property type="match status" value="1"/>
</dbReference>
<dbReference type="PROSITE" id="PS52040">
    <property type="entry name" value="TOPO_IIA"/>
    <property type="match status" value="1"/>
</dbReference>
<dbReference type="PROSITE" id="PS00177">
    <property type="entry name" value="TOPOISOMERASE_II"/>
    <property type="match status" value="1"/>
</dbReference>
<organism>
    <name type="scientific">African swine fever virus (isolate Tick/South Africa/Pretoriuskop Pr4/1996)</name>
    <name type="common">ASFV</name>
    <dbReference type="NCBI Taxonomy" id="561443"/>
    <lineage>
        <taxon>Viruses</taxon>
        <taxon>Varidnaviria</taxon>
        <taxon>Bamfordvirae</taxon>
        <taxon>Nucleocytoviricota</taxon>
        <taxon>Pokkesviricetes</taxon>
        <taxon>Asfuvirales</taxon>
        <taxon>Asfarviridae</taxon>
        <taxon>Asfivirus</taxon>
        <taxon>African swine fever virus</taxon>
    </lineage>
</organism>
<evidence type="ECO:0000250" key="1"/>
<evidence type="ECO:0000250" key="2">
    <source>
        <dbReference type="UniProtKB" id="P11388"/>
    </source>
</evidence>
<evidence type="ECO:0000250" key="3">
    <source>
        <dbReference type="UniProtKB" id="Q00942"/>
    </source>
</evidence>
<evidence type="ECO:0000255" key="4">
    <source>
        <dbReference type="PROSITE-ProRule" id="PRU01384"/>
    </source>
</evidence>
<evidence type="ECO:0000305" key="5"/>
<feature type="chain" id="PRO_0000373130" description="DNA topoisomerase 2">
    <location>
        <begin position="1"/>
        <end position="1192"/>
    </location>
</feature>
<feature type="domain" description="Topo IIA-type catalytic" evidence="4">
    <location>
        <begin position="707"/>
        <end position="1174"/>
    </location>
</feature>
<feature type="active site" description="O-(5'-phospho-DNA)-tyrosine intermediate" evidence="4">
    <location>
        <position position="800"/>
    </location>
</feature>
<feature type="binding site" evidence="1">
    <location>
        <position position="64"/>
    </location>
    <ligand>
        <name>ATP</name>
        <dbReference type="ChEBI" id="CHEBI:30616"/>
    </ligand>
</feature>
<feature type="binding site" evidence="1">
    <location>
        <position position="95"/>
    </location>
    <ligand>
        <name>ATP</name>
        <dbReference type="ChEBI" id="CHEBI:30616"/>
    </ligand>
</feature>
<feature type="binding site" evidence="3">
    <location>
        <begin position="142"/>
        <end position="149"/>
    </location>
    <ligand>
        <name>ATP</name>
        <dbReference type="ChEBI" id="CHEBI:30616"/>
    </ligand>
</feature>
<feature type="binding site" evidence="2">
    <location>
        <position position="438"/>
    </location>
    <ligand>
        <name>Mg(2+)</name>
        <dbReference type="ChEBI" id="CHEBI:18420"/>
        <label>1</label>
        <note>catalytic</note>
    </ligand>
</feature>
<feature type="binding site" evidence="2">
    <location>
        <position position="539"/>
    </location>
    <ligand>
        <name>Mg(2+)</name>
        <dbReference type="ChEBI" id="CHEBI:18420"/>
        <label>1</label>
        <note>catalytic</note>
    </ligand>
</feature>
<feature type="binding site" evidence="2">
    <location>
        <position position="539"/>
    </location>
    <ligand>
        <name>Mg(2+)</name>
        <dbReference type="ChEBI" id="CHEBI:18420"/>
        <label>2</label>
    </ligand>
</feature>
<feature type="binding site" evidence="2">
    <location>
        <position position="541"/>
    </location>
    <ligand>
        <name>Mg(2+)</name>
        <dbReference type="ChEBI" id="CHEBI:18420"/>
        <label>2</label>
    </ligand>
</feature>
<feature type="site" description="Transition state stabilizer" evidence="1">
    <location>
        <position position="799"/>
    </location>
</feature>
<organismHost>
    <name type="scientific">Ornithodoros</name>
    <name type="common">relapsing fever ticks</name>
    <dbReference type="NCBI Taxonomy" id="6937"/>
</organismHost>
<organismHost>
    <name type="scientific">Phacochoerus aethiopicus</name>
    <name type="common">Warthog</name>
    <dbReference type="NCBI Taxonomy" id="85517"/>
</organismHost>
<organismHost>
    <name type="scientific">Phacochoerus africanus</name>
    <name type="common">Warthog</name>
    <dbReference type="NCBI Taxonomy" id="41426"/>
</organismHost>
<organismHost>
    <name type="scientific">Potamochoerus larvatus</name>
    <name type="common">Bushpig</name>
    <dbReference type="NCBI Taxonomy" id="273792"/>
</organismHost>
<organismHost>
    <name type="scientific">Sus scrofa</name>
    <name type="common">Pig</name>
    <dbReference type="NCBI Taxonomy" id="9823"/>
</organismHost>